<gene>
    <name evidence="1" type="primary">dxs</name>
    <name type="ordered locus">NTHI1691</name>
</gene>
<evidence type="ECO:0000255" key="1">
    <source>
        <dbReference type="HAMAP-Rule" id="MF_00315"/>
    </source>
</evidence>
<accession>Q4QKG6</accession>
<feature type="chain" id="PRO_0000256427" description="1-deoxy-D-xylulose-5-phosphate synthase">
    <location>
        <begin position="1"/>
        <end position="625"/>
    </location>
</feature>
<feature type="binding site" evidence="1">
    <location>
        <position position="80"/>
    </location>
    <ligand>
        <name>thiamine diphosphate</name>
        <dbReference type="ChEBI" id="CHEBI:58937"/>
    </ligand>
</feature>
<feature type="binding site" evidence="1">
    <location>
        <begin position="121"/>
        <end position="123"/>
    </location>
    <ligand>
        <name>thiamine diphosphate</name>
        <dbReference type="ChEBI" id="CHEBI:58937"/>
    </ligand>
</feature>
<feature type="binding site" evidence="1">
    <location>
        <position position="152"/>
    </location>
    <ligand>
        <name>Mg(2+)</name>
        <dbReference type="ChEBI" id="CHEBI:18420"/>
    </ligand>
</feature>
<feature type="binding site" evidence="1">
    <location>
        <begin position="153"/>
        <end position="154"/>
    </location>
    <ligand>
        <name>thiamine diphosphate</name>
        <dbReference type="ChEBI" id="CHEBI:58937"/>
    </ligand>
</feature>
<feature type="binding site" evidence="1">
    <location>
        <position position="181"/>
    </location>
    <ligand>
        <name>Mg(2+)</name>
        <dbReference type="ChEBI" id="CHEBI:18420"/>
    </ligand>
</feature>
<feature type="binding site" evidence="1">
    <location>
        <position position="181"/>
    </location>
    <ligand>
        <name>thiamine diphosphate</name>
        <dbReference type="ChEBI" id="CHEBI:58937"/>
    </ligand>
</feature>
<feature type="binding site" evidence="1">
    <location>
        <position position="290"/>
    </location>
    <ligand>
        <name>thiamine diphosphate</name>
        <dbReference type="ChEBI" id="CHEBI:58937"/>
    </ligand>
</feature>
<feature type="binding site" evidence="1">
    <location>
        <position position="371"/>
    </location>
    <ligand>
        <name>thiamine diphosphate</name>
        <dbReference type="ChEBI" id="CHEBI:58937"/>
    </ligand>
</feature>
<dbReference type="EC" id="2.2.1.7" evidence="1"/>
<dbReference type="EMBL" id="CP000057">
    <property type="protein sequence ID" value="AAX88481.1"/>
    <property type="molecule type" value="Genomic_DNA"/>
</dbReference>
<dbReference type="RefSeq" id="WP_011272595.1">
    <property type="nucleotide sequence ID" value="NC_007146.2"/>
</dbReference>
<dbReference type="SMR" id="Q4QKG6"/>
<dbReference type="BindingDB" id="Q4QKG6"/>
<dbReference type="ChEMBL" id="CHEMBL3559646"/>
<dbReference type="KEGG" id="hit:NTHI1691"/>
<dbReference type="HOGENOM" id="CLU_009227_1_4_6"/>
<dbReference type="UniPathway" id="UPA00064">
    <property type="reaction ID" value="UER00091"/>
</dbReference>
<dbReference type="Proteomes" id="UP000002525">
    <property type="component" value="Chromosome"/>
</dbReference>
<dbReference type="GO" id="GO:0005829">
    <property type="term" value="C:cytosol"/>
    <property type="evidence" value="ECO:0007669"/>
    <property type="project" value="TreeGrafter"/>
</dbReference>
<dbReference type="GO" id="GO:0008661">
    <property type="term" value="F:1-deoxy-D-xylulose-5-phosphate synthase activity"/>
    <property type="evidence" value="ECO:0007669"/>
    <property type="project" value="UniProtKB-UniRule"/>
</dbReference>
<dbReference type="GO" id="GO:0000287">
    <property type="term" value="F:magnesium ion binding"/>
    <property type="evidence" value="ECO:0007669"/>
    <property type="project" value="UniProtKB-UniRule"/>
</dbReference>
<dbReference type="GO" id="GO:0030976">
    <property type="term" value="F:thiamine pyrophosphate binding"/>
    <property type="evidence" value="ECO:0007669"/>
    <property type="project" value="UniProtKB-UniRule"/>
</dbReference>
<dbReference type="GO" id="GO:0052865">
    <property type="term" value="P:1-deoxy-D-xylulose 5-phosphate biosynthetic process"/>
    <property type="evidence" value="ECO:0007669"/>
    <property type="project" value="UniProtKB-UniPathway"/>
</dbReference>
<dbReference type="GO" id="GO:0019288">
    <property type="term" value="P:isopentenyl diphosphate biosynthetic process, methylerythritol 4-phosphate pathway"/>
    <property type="evidence" value="ECO:0007669"/>
    <property type="project" value="TreeGrafter"/>
</dbReference>
<dbReference type="GO" id="GO:0016114">
    <property type="term" value="P:terpenoid biosynthetic process"/>
    <property type="evidence" value="ECO:0007669"/>
    <property type="project" value="UniProtKB-UniRule"/>
</dbReference>
<dbReference type="GO" id="GO:0009228">
    <property type="term" value="P:thiamine biosynthetic process"/>
    <property type="evidence" value="ECO:0007669"/>
    <property type="project" value="UniProtKB-UniRule"/>
</dbReference>
<dbReference type="CDD" id="cd02007">
    <property type="entry name" value="TPP_DXS"/>
    <property type="match status" value="1"/>
</dbReference>
<dbReference type="CDD" id="cd07033">
    <property type="entry name" value="TPP_PYR_DXS_TK_like"/>
    <property type="match status" value="1"/>
</dbReference>
<dbReference type="FunFam" id="3.40.50.920:FF:000002">
    <property type="entry name" value="1-deoxy-D-xylulose-5-phosphate synthase"/>
    <property type="match status" value="1"/>
</dbReference>
<dbReference type="FunFam" id="3.40.50.970:FF:000005">
    <property type="entry name" value="1-deoxy-D-xylulose-5-phosphate synthase"/>
    <property type="match status" value="1"/>
</dbReference>
<dbReference type="Gene3D" id="3.40.50.920">
    <property type="match status" value="1"/>
</dbReference>
<dbReference type="Gene3D" id="3.40.50.970">
    <property type="match status" value="2"/>
</dbReference>
<dbReference type="HAMAP" id="MF_00315">
    <property type="entry name" value="DXP_synth"/>
    <property type="match status" value="1"/>
</dbReference>
<dbReference type="InterPro" id="IPR005477">
    <property type="entry name" value="Dxylulose-5-P_synthase"/>
</dbReference>
<dbReference type="InterPro" id="IPR029061">
    <property type="entry name" value="THDP-binding"/>
</dbReference>
<dbReference type="InterPro" id="IPR009014">
    <property type="entry name" value="Transketo_C/PFOR_II"/>
</dbReference>
<dbReference type="InterPro" id="IPR005475">
    <property type="entry name" value="Transketolase-like_Pyr-bd"/>
</dbReference>
<dbReference type="InterPro" id="IPR020826">
    <property type="entry name" value="Transketolase_BS"/>
</dbReference>
<dbReference type="InterPro" id="IPR033248">
    <property type="entry name" value="Transketolase_C"/>
</dbReference>
<dbReference type="InterPro" id="IPR049557">
    <property type="entry name" value="Transketolase_CS"/>
</dbReference>
<dbReference type="NCBIfam" id="TIGR00204">
    <property type="entry name" value="dxs"/>
    <property type="match status" value="1"/>
</dbReference>
<dbReference type="NCBIfam" id="NF003933">
    <property type="entry name" value="PRK05444.2-2"/>
    <property type="match status" value="1"/>
</dbReference>
<dbReference type="PANTHER" id="PTHR43322">
    <property type="entry name" value="1-D-DEOXYXYLULOSE 5-PHOSPHATE SYNTHASE-RELATED"/>
    <property type="match status" value="1"/>
</dbReference>
<dbReference type="PANTHER" id="PTHR43322:SF5">
    <property type="entry name" value="1-DEOXY-D-XYLULOSE-5-PHOSPHATE SYNTHASE, CHLOROPLASTIC"/>
    <property type="match status" value="1"/>
</dbReference>
<dbReference type="Pfam" id="PF13292">
    <property type="entry name" value="DXP_synthase_N"/>
    <property type="match status" value="1"/>
</dbReference>
<dbReference type="Pfam" id="PF02779">
    <property type="entry name" value="Transket_pyr"/>
    <property type="match status" value="1"/>
</dbReference>
<dbReference type="Pfam" id="PF02780">
    <property type="entry name" value="Transketolase_C"/>
    <property type="match status" value="1"/>
</dbReference>
<dbReference type="SMART" id="SM00861">
    <property type="entry name" value="Transket_pyr"/>
    <property type="match status" value="1"/>
</dbReference>
<dbReference type="SUPFAM" id="SSF52518">
    <property type="entry name" value="Thiamin diphosphate-binding fold (THDP-binding)"/>
    <property type="match status" value="2"/>
</dbReference>
<dbReference type="SUPFAM" id="SSF52922">
    <property type="entry name" value="TK C-terminal domain-like"/>
    <property type="match status" value="1"/>
</dbReference>
<dbReference type="PROSITE" id="PS00801">
    <property type="entry name" value="TRANSKETOLASE_1"/>
    <property type="match status" value="1"/>
</dbReference>
<dbReference type="PROSITE" id="PS00802">
    <property type="entry name" value="TRANSKETOLASE_2"/>
    <property type="match status" value="1"/>
</dbReference>
<name>DXS_HAEI8</name>
<proteinExistence type="inferred from homology"/>
<keyword id="KW-0414">Isoprene biosynthesis</keyword>
<keyword id="KW-0460">Magnesium</keyword>
<keyword id="KW-0479">Metal-binding</keyword>
<keyword id="KW-0784">Thiamine biosynthesis</keyword>
<keyword id="KW-0786">Thiamine pyrophosphate</keyword>
<keyword id="KW-0808">Transferase</keyword>
<comment type="function">
    <text evidence="1">Catalyzes the acyloin condensation reaction between C atoms 2 and 3 of pyruvate and glyceraldehyde 3-phosphate to yield 1-deoxy-D-xylulose-5-phosphate (DXP).</text>
</comment>
<comment type="catalytic activity">
    <reaction evidence="1">
        <text>D-glyceraldehyde 3-phosphate + pyruvate + H(+) = 1-deoxy-D-xylulose 5-phosphate + CO2</text>
        <dbReference type="Rhea" id="RHEA:12605"/>
        <dbReference type="ChEBI" id="CHEBI:15361"/>
        <dbReference type="ChEBI" id="CHEBI:15378"/>
        <dbReference type="ChEBI" id="CHEBI:16526"/>
        <dbReference type="ChEBI" id="CHEBI:57792"/>
        <dbReference type="ChEBI" id="CHEBI:59776"/>
        <dbReference type="EC" id="2.2.1.7"/>
    </reaction>
</comment>
<comment type="cofactor">
    <cofactor evidence="1">
        <name>Mg(2+)</name>
        <dbReference type="ChEBI" id="CHEBI:18420"/>
    </cofactor>
    <text evidence="1">Binds 1 Mg(2+) ion per subunit.</text>
</comment>
<comment type="cofactor">
    <cofactor evidence="1">
        <name>thiamine diphosphate</name>
        <dbReference type="ChEBI" id="CHEBI:58937"/>
    </cofactor>
    <text evidence="1">Binds 1 thiamine pyrophosphate per subunit.</text>
</comment>
<comment type="pathway">
    <text evidence="1">Metabolic intermediate biosynthesis; 1-deoxy-D-xylulose 5-phosphate biosynthesis; 1-deoxy-D-xylulose 5-phosphate from D-glyceraldehyde 3-phosphate and pyruvate: step 1/1.</text>
</comment>
<comment type="subunit">
    <text evidence="1">Homodimer.</text>
</comment>
<comment type="similarity">
    <text evidence="1">Belongs to the transketolase family. DXPS subfamily.</text>
</comment>
<protein>
    <recommendedName>
        <fullName evidence="1">1-deoxy-D-xylulose-5-phosphate synthase</fullName>
        <ecNumber evidence="1">2.2.1.7</ecNumber>
    </recommendedName>
    <alternativeName>
        <fullName evidence="1">1-deoxyxylulose-5-phosphate synthase</fullName>
        <shortName evidence="1">DXP synthase</shortName>
        <shortName evidence="1">DXPS</shortName>
    </alternativeName>
</protein>
<sequence length="625" mass="68591">MTNNMNNYPLLSLINSPEDLRLLNKDQLPQLCQELRAYLLESVSQTSGHLASGLGTVELTVALHYVYKTPFDQLIWDVGHQAYPHKILTGRREQMSTIRQKDGIHPFPWREESEFDVLSVGHSSTSISAGLGIAVAAERENAGRKTVCVIGDGAITAGMAFEALNHAGALHTDMLVILNDNEMSISENVGALNNHLARIFSGSLYSTLRDGSKKILDKVPPIKNFMKKTEEHMKGVMFSPESTLFEELGFNYIGPVDGHNIDELVAMLTNMRNLKGPQFLHIKTKKGKGYAPAEKDPIGFHGVPKFDPISGELPKNNSKPTYSKIFGDWLCEMAEKDAKIIGITPAMREGSGMVEFSQRFPKQYFDVAIAEQHTVTFATGLAIGGYKPVVAIYSTFLQRAYDQLIHDVAIQNLPVLFAIDRAGIVGADGATHQGAFDISFMRCIPNMIIMTPSDENECRQMLYTGYQCGKPAAVRYPRGNAVGVKLTPLEMLPIGKSRLIRKGQKIAILNFGTLLPSALELSEKLNATVVDMRFVKPIDIEMINVLAQTHDYLVTLEENAIQGGAGSAVAEVLNSSGKSTALLQLGLPDYFIPQATRQEALADLGLDTKGIEEKILNFIAKQGNL</sequence>
<reference key="1">
    <citation type="journal article" date="2005" name="J. Bacteriol.">
        <title>Genomic sequence of an otitis media isolate of nontypeable Haemophilus influenzae: comparative study with H. influenzae serotype d, strain KW20.</title>
        <authorList>
            <person name="Harrison A."/>
            <person name="Dyer D.W."/>
            <person name="Gillaspy A."/>
            <person name="Ray W.C."/>
            <person name="Mungur R."/>
            <person name="Carson M.B."/>
            <person name="Zhong H."/>
            <person name="Gipson J."/>
            <person name="Gipson M."/>
            <person name="Johnson L.S."/>
            <person name="Lewis L."/>
            <person name="Bakaletz L.O."/>
            <person name="Munson R.S. Jr."/>
        </authorList>
    </citation>
    <scope>NUCLEOTIDE SEQUENCE [LARGE SCALE GENOMIC DNA]</scope>
    <source>
        <strain>86-028NP</strain>
    </source>
</reference>
<organism>
    <name type="scientific">Haemophilus influenzae (strain 86-028NP)</name>
    <dbReference type="NCBI Taxonomy" id="281310"/>
    <lineage>
        <taxon>Bacteria</taxon>
        <taxon>Pseudomonadati</taxon>
        <taxon>Pseudomonadota</taxon>
        <taxon>Gammaproteobacteria</taxon>
        <taxon>Pasteurellales</taxon>
        <taxon>Pasteurellaceae</taxon>
        <taxon>Haemophilus</taxon>
    </lineage>
</organism>